<sequence>MIVKTKEEVVGTPREIFAPNGHWISRRYLLAGEGMGFSFHETIILAGTKTHIHYQNHLEAVFCVQGRGEVELIPSGERFLIEEGVMYALDKHDEHYLSASEEMRLICVFNPPLQGNEVHDEKGVYPLKKGQ</sequence>
<dbReference type="EC" id="4.2.1.108" evidence="1"/>
<dbReference type="EMBL" id="BX571659">
    <property type="protein sequence ID" value="CAE09966.1"/>
    <property type="molecule type" value="Genomic_DNA"/>
</dbReference>
<dbReference type="RefSeq" id="WP_011138763.1">
    <property type="nucleotide sequence ID" value="NC_005090.1"/>
</dbReference>
<dbReference type="SMR" id="Q7MS24"/>
<dbReference type="STRING" id="273121.WS0856"/>
<dbReference type="DNASU" id="2554353"/>
<dbReference type="KEGG" id="wsu:WS0856"/>
<dbReference type="eggNOG" id="COG1917">
    <property type="taxonomic scope" value="Bacteria"/>
</dbReference>
<dbReference type="HOGENOM" id="CLU_154525_0_0_7"/>
<dbReference type="UniPathway" id="UPA00067">
    <property type="reaction ID" value="UER00123"/>
</dbReference>
<dbReference type="Proteomes" id="UP000000422">
    <property type="component" value="Chromosome"/>
</dbReference>
<dbReference type="GO" id="GO:0033990">
    <property type="term" value="F:ectoine synthase activity"/>
    <property type="evidence" value="ECO:0007669"/>
    <property type="project" value="UniProtKB-EC"/>
</dbReference>
<dbReference type="GO" id="GO:0019491">
    <property type="term" value="P:ectoine biosynthetic process"/>
    <property type="evidence" value="ECO:0007669"/>
    <property type="project" value="UniProtKB-UniRule"/>
</dbReference>
<dbReference type="CDD" id="cd06978">
    <property type="entry name" value="cupin_EctC"/>
    <property type="match status" value="1"/>
</dbReference>
<dbReference type="Gene3D" id="2.60.120.10">
    <property type="entry name" value="Jelly Rolls"/>
    <property type="match status" value="1"/>
</dbReference>
<dbReference type="HAMAP" id="MF_01255">
    <property type="entry name" value="Ectoine_synth"/>
    <property type="match status" value="1"/>
</dbReference>
<dbReference type="InterPro" id="IPR010462">
    <property type="entry name" value="Ectoine_synth"/>
</dbReference>
<dbReference type="InterPro" id="IPR014710">
    <property type="entry name" value="RmlC-like_jellyroll"/>
</dbReference>
<dbReference type="InterPro" id="IPR011051">
    <property type="entry name" value="RmlC_Cupin_sf"/>
</dbReference>
<dbReference type="NCBIfam" id="NF009806">
    <property type="entry name" value="PRK13290.1"/>
    <property type="match status" value="1"/>
</dbReference>
<dbReference type="PANTHER" id="PTHR39289">
    <property type="match status" value="1"/>
</dbReference>
<dbReference type="PANTHER" id="PTHR39289:SF1">
    <property type="entry name" value="L-ECTOINE SYNTHASE"/>
    <property type="match status" value="1"/>
</dbReference>
<dbReference type="Pfam" id="PF06339">
    <property type="entry name" value="Ectoine_synth"/>
    <property type="match status" value="1"/>
</dbReference>
<dbReference type="SUPFAM" id="SSF51182">
    <property type="entry name" value="RmlC-like cupins"/>
    <property type="match status" value="1"/>
</dbReference>
<keyword id="KW-0456">Lyase</keyword>
<keyword id="KW-1185">Reference proteome</keyword>
<organism>
    <name type="scientific">Wolinella succinogenes (strain ATCC 29543 / DSM 1740 / CCUG 13145 / JCM 31913 / LMG 7466 / NCTC 11488 / FDC 602W)</name>
    <name type="common">Vibrio succinogenes</name>
    <dbReference type="NCBI Taxonomy" id="273121"/>
    <lineage>
        <taxon>Bacteria</taxon>
        <taxon>Pseudomonadati</taxon>
        <taxon>Campylobacterota</taxon>
        <taxon>Epsilonproteobacteria</taxon>
        <taxon>Campylobacterales</taxon>
        <taxon>Helicobacteraceae</taxon>
        <taxon>Wolinella</taxon>
    </lineage>
</organism>
<comment type="function">
    <text evidence="1">Catalyzes the circularization of gamma-N-acetyl-alpha,gamma-diaminobutyric acid (ADABA) to ectoine (1,4,5,6-tetrahydro-2-methyl-4-pyrimidine carboxylic acid), which is an excellent osmoprotectant.</text>
</comment>
<comment type="catalytic activity">
    <reaction evidence="1">
        <text>(2S)-4-acetamido-2-aminobutanoate = L-ectoine + H2O</text>
        <dbReference type="Rhea" id="RHEA:17281"/>
        <dbReference type="ChEBI" id="CHEBI:15377"/>
        <dbReference type="ChEBI" id="CHEBI:58515"/>
        <dbReference type="ChEBI" id="CHEBI:58929"/>
        <dbReference type="EC" id="4.2.1.108"/>
    </reaction>
</comment>
<comment type="pathway">
    <text evidence="1">Amine and polyamine biosynthesis; ectoine biosynthesis; L-ectoine from L-aspartate 4-semialdehyde: step 3/3.</text>
</comment>
<comment type="similarity">
    <text evidence="1">Belongs to the ectoine synthase family.</text>
</comment>
<reference key="1">
    <citation type="journal article" date="2003" name="Proc. Natl. Acad. Sci. U.S.A.">
        <title>Complete genome sequence and analysis of Wolinella succinogenes.</title>
        <authorList>
            <person name="Baar C."/>
            <person name="Eppinger M."/>
            <person name="Raddatz G."/>
            <person name="Simon J."/>
            <person name="Lanz C."/>
            <person name="Klimmek O."/>
            <person name="Nandakumar R."/>
            <person name="Gross R."/>
            <person name="Rosinus A."/>
            <person name="Keller H."/>
            <person name="Jagtap P."/>
            <person name="Linke B."/>
            <person name="Meyer F."/>
            <person name="Lederer H."/>
            <person name="Schuster S.C."/>
        </authorList>
    </citation>
    <scope>NUCLEOTIDE SEQUENCE [LARGE SCALE GENOMIC DNA]</scope>
    <source>
        <strain>ATCC 29543 / DSM 1740 / CCUG 13145 / JCM 31913 / LMG 7466 / NCTC 11488 / FDC 602W</strain>
    </source>
</reference>
<feature type="chain" id="PRO_0000220162" description="L-ectoine synthase">
    <location>
        <begin position="1"/>
        <end position="131"/>
    </location>
</feature>
<evidence type="ECO:0000255" key="1">
    <source>
        <dbReference type="HAMAP-Rule" id="MF_01255"/>
    </source>
</evidence>
<name>ECTC_WOLSU</name>
<protein>
    <recommendedName>
        <fullName evidence="1">L-ectoine synthase</fullName>
        <ecNumber evidence="1">4.2.1.108</ecNumber>
    </recommendedName>
    <alternativeName>
        <fullName evidence="1">N-acetyldiaminobutyrate dehydratase</fullName>
    </alternativeName>
</protein>
<proteinExistence type="inferred from homology"/>
<gene>
    <name evidence="1" type="primary">ectC</name>
    <name type="ordered locus">WS0856</name>
</gene>
<accession>Q7MS24</accession>